<sequence>MGLGKGKDEYKLAATSEDGGKKDKKAKAKKDMDDLKKEVDLDDHKLTLDELHRKYGTDLTRGLSSSRAKEILARDGPNALTPPPTTPEWVKFCKQLFGGFSMLLWIGAILCFLAYGIQAASEDEPANDNLYLGIVLSAVVIITGCFSYYQEAKSSKIMESFKNLVPRQALGIRDGEKKNINAEEVVLGDLVEVKGGDRIPADLRIISAHGCKVDNSSLTGESEPQTRSPDFSNENPLETRNISFFSTNCIEGTARGIVINTEDRTVMGRIATLASSLEGGKTPIAIEIEHFIHIITGVAVFLGVSFFILSLILGYNWLEAVIFLIGIIVANVPEGLLATVTVCLTLTAKRMAKKNCLVKNLEAVETLGSTSTICSDKTGTLTQNRMTVAHMWFDNQIHEADTTENQSGTSFDRSSATWANLSRIAGLCNRAVFLADQSNIPILKRDVAGDASEAALLKCIELCCGSVNEMREKYPKIAEIPFNSTNKYQLSIHKNTTPGETKHLLVMKGAPERILDRCNSIVLQGKVQALDDEMKDAFQNAYVELGGLGERVLGFCHYHLPDDEFPEGFAFDTDEVNFPTENLCFVGLMAMIDPPRAAVPDAVGKCRSAGIKVIMVTGDHPITAKAIAKGVGIISEGNETVEDIAARLNVPVSEVNPRDAKACVVHGSELKDMTSEELDDLLKHHTEIVFARTSPQQKLIIVEGCQRQGAIVAVTGDGVNDSPALKKADIGVAMGIAGSDVSKQAADMILLDDNFASIVTGVEEGRLIFDNLKKSIAYTLTSNIPEISPFLLFIIANIPLPLGTVTILCIDLGTDMVPAISLAYEKAESDIMKRQPRNPKTDKLVNERLISIAYGQIGMMQATAGFFTYFVILAENGFLPMDLIGVRVLWDDKYVNDLEDSYGQQWTYERRKIVEYSCHTAFFASIVIVQWADLIICKTRRNSIVQQGMTNRILIFGLFEETALAAFLSYCPGMDVALRMYPMKPLWWFCAFPYSLLIFLYDEARRYILRRNPGGWVEKETYY</sequence>
<accession>Q9YH26</accession>
<comment type="function">
    <text evidence="2">This is the catalytic component of the active enzyme, which catalyzes the hydrolysis of ATP coupled with the exchange of sodium and potassium ions across the plasma membrane. This action creates the electrochemical gradient of sodium and potassium ions, providing the energy for active transport of various nutrients.</text>
</comment>
<comment type="catalytic activity">
    <reaction>
        <text>K(+)(out) + Na(+)(in) + ATP + H2O = K(+)(in) + Na(+)(out) + ADP + phosphate + H(+)</text>
        <dbReference type="Rhea" id="RHEA:18353"/>
        <dbReference type="ChEBI" id="CHEBI:15377"/>
        <dbReference type="ChEBI" id="CHEBI:15378"/>
        <dbReference type="ChEBI" id="CHEBI:29101"/>
        <dbReference type="ChEBI" id="CHEBI:29103"/>
        <dbReference type="ChEBI" id="CHEBI:30616"/>
        <dbReference type="ChEBI" id="CHEBI:43474"/>
        <dbReference type="ChEBI" id="CHEBI:456216"/>
        <dbReference type="EC" id="7.2.2.13"/>
    </reaction>
</comment>
<comment type="subunit">
    <text evidence="5">The sodium/potassium-transporting ATPase is composed of a catalytic alpha subunit, an auxiliary non-catalytic beta subunit and an additional regulatory subunit.</text>
</comment>
<comment type="subcellular location">
    <subcellularLocation>
        <location evidence="2">Cell membrane</location>
        <location evidence="2">Sarcolemma</location>
        <topology evidence="3">Multi-pass membrane protein</topology>
    </subcellularLocation>
</comment>
<comment type="similarity">
    <text evidence="5">Belongs to the cation transport ATPase (P-type) (TC 3.A.3) family. Type IIC subfamily.</text>
</comment>
<proteinExistence type="evidence at transcript level"/>
<feature type="propeptide" id="PRO_0000002499" evidence="1">
    <location>
        <begin position="1"/>
        <end position="5"/>
    </location>
</feature>
<feature type="chain" id="PRO_0000002500" description="Sodium/potassium-transporting ATPase subunit alpha-1">
    <location>
        <begin position="6"/>
        <end position="1023"/>
    </location>
</feature>
<feature type="topological domain" description="Cytoplasmic" evidence="3">
    <location>
        <begin position="6"/>
        <end position="87"/>
    </location>
</feature>
<feature type="transmembrane region" description="Helical" evidence="3">
    <location>
        <begin position="88"/>
        <end position="108"/>
    </location>
</feature>
<feature type="topological domain" description="Extracellular" evidence="3">
    <location>
        <begin position="109"/>
        <end position="131"/>
    </location>
</feature>
<feature type="transmembrane region" description="Helical" evidence="3">
    <location>
        <begin position="132"/>
        <end position="152"/>
    </location>
</feature>
<feature type="topological domain" description="Cytoplasmic" evidence="3">
    <location>
        <begin position="153"/>
        <end position="288"/>
    </location>
</feature>
<feature type="transmembrane region" description="Helical" evidence="3">
    <location>
        <begin position="289"/>
        <end position="308"/>
    </location>
</feature>
<feature type="topological domain" description="Extracellular" evidence="3">
    <location>
        <begin position="309"/>
        <end position="320"/>
    </location>
</feature>
<feature type="transmembrane region" description="Helical" evidence="3">
    <location>
        <begin position="321"/>
        <end position="338"/>
    </location>
</feature>
<feature type="topological domain" description="Cytoplasmic" evidence="3">
    <location>
        <begin position="339"/>
        <end position="772"/>
    </location>
</feature>
<feature type="transmembrane region" description="Helical" evidence="3">
    <location>
        <begin position="773"/>
        <end position="792"/>
    </location>
</feature>
<feature type="topological domain" description="Extracellular" evidence="3">
    <location>
        <begin position="793"/>
        <end position="802"/>
    </location>
</feature>
<feature type="transmembrane region" description="Helical" evidence="3">
    <location>
        <begin position="803"/>
        <end position="823"/>
    </location>
</feature>
<feature type="topological domain" description="Cytoplasmic" evidence="3">
    <location>
        <begin position="824"/>
        <end position="843"/>
    </location>
</feature>
<feature type="transmembrane region" description="Helical" evidence="3">
    <location>
        <begin position="844"/>
        <end position="866"/>
    </location>
</feature>
<feature type="topological domain" description="Extracellular" evidence="3">
    <location>
        <begin position="867"/>
        <end position="918"/>
    </location>
</feature>
<feature type="transmembrane region" description="Helical" evidence="3">
    <location>
        <begin position="919"/>
        <end position="938"/>
    </location>
</feature>
<feature type="topological domain" description="Cytoplasmic" evidence="3">
    <location>
        <begin position="939"/>
        <end position="951"/>
    </location>
</feature>
<feature type="transmembrane region" description="Helical" evidence="3">
    <location>
        <begin position="952"/>
        <end position="970"/>
    </location>
</feature>
<feature type="topological domain" description="Extracellular" evidence="3">
    <location>
        <begin position="971"/>
        <end position="985"/>
    </location>
</feature>
<feature type="transmembrane region" description="Helical" evidence="3">
    <location>
        <begin position="986"/>
        <end position="1006"/>
    </location>
</feature>
<feature type="topological domain" description="Cytoplasmic" evidence="3">
    <location>
        <begin position="1007"/>
        <end position="1023"/>
    </location>
</feature>
<feature type="region of interest" description="Disordered" evidence="4">
    <location>
        <begin position="1"/>
        <end position="33"/>
    </location>
</feature>
<feature type="region of interest" description="Interaction with phosphoinositide-3 kinase" evidence="1">
    <location>
        <begin position="82"/>
        <end position="84"/>
    </location>
</feature>
<feature type="region of interest" description="Disordered" evidence="4">
    <location>
        <begin position="216"/>
        <end position="237"/>
    </location>
</feature>
<feature type="compositionally biased region" description="Basic and acidic residues" evidence="4">
    <location>
        <begin position="1"/>
        <end position="11"/>
    </location>
</feature>
<feature type="active site" description="4-aspartylphosphate intermediate" evidence="1">
    <location>
        <position position="376"/>
    </location>
</feature>
<feature type="binding site" evidence="1">
    <location>
        <position position="487"/>
    </location>
    <ligand>
        <name>ATP</name>
        <dbReference type="ChEBI" id="CHEBI:30616"/>
    </ligand>
</feature>
<feature type="binding site" evidence="1">
    <location>
        <position position="717"/>
    </location>
    <ligand>
        <name>Mg(2+)</name>
        <dbReference type="ChEBI" id="CHEBI:18420"/>
    </ligand>
</feature>
<feature type="binding site" evidence="1">
    <location>
        <position position="721"/>
    </location>
    <ligand>
        <name>Mg(2+)</name>
        <dbReference type="ChEBI" id="CHEBI:18420"/>
    </ligand>
</feature>
<feature type="modified residue" description="Phosphoserine; by PKC" evidence="1">
    <location>
        <position position="16"/>
    </location>
</feature>
<feature type="modified residue" description="Phosphoserine; by PKA" evidence="1">
    <location>
        <position position="943"/>
    </location>
</feature>
<protein>
    <recommendedName>
        <fullName>Sodium/potassium-transporting ATPase subunit alpha-1</fullName>
        <shortName>Na(+)/K(+) ATPase alpha-1 subunit</shortName>
        <ecNumber>7.2.2.13</ecNumber>
    </recommendedName>
    <alternativeName>
        <fullName>Sodium pump subunit alpha-1</fullName>
    </alternativeName>
</protein>
<organism>
    <name type="scientific">Oreochromis mossambicus</name>
    <name type="common">Mozambique tilapia</name>
    <name type="synonym">Tilapia mossambica</name>
    <dbReference type="NCBI Taxonomy" id="8127"/>
    <lineage>
        <taxon>Eukaryota</taxon>
        <taxon>Metazoa</taxon>
        <taxon>Chordata</taxon>
        <taxon>Craniata</taxon>
        <taxon>Vertebrata</taxon>
        <taxon>Euteleostomi</taxon>
        <taxon>Actinopterygii</taxon>
        <taxon>Neopterygii</taxon>
        <taxon>Teleostei</taxon>
        <taxon>Neoteleostei</taxon>
        <taxon>Acanthomorphata</taxon>
        <taxon>Ovalentaria</taxon>
        <taxon>Cichlomorphae</taxon>
        <taxon>Cichliformes</taxon>
        <taxon>Cichlidae</taxon>
        <taxon>African cichlids</taxon>
        <taxon>Pseudocrenilabrinae</taxon>
        <taxon>Oreochromini</taxon>
        <taxon>Oreochromis</taxon>
    </lineage>
</organism>
<evidence type="ECO:0000250" key="1"/>
<evidence type="ECO:0000250" key="2">
    <source>
        <dbReference type="UniProtKB" id="P05023"/>
    </source>
</evidence>
<evidence type="ECO:0000255" key="3"/>
<evidence type="ECO:0000256" key="4">
    <source>
        <dbReference type="SAM" id="MobiDB-lite"/>
    </source>
</evidence>
<evidence type="ECO:0000305" key="5"/>
<name>AT1A1_OREMO</name>
<reference key="1">
    <citation type="journal article" date="2002" name="Mar. Biotechnol.">
        <title>Gene expression of Na+-K+-ATPase alpha 1 and alpha 3 subunits in gills of the teleost Oreochromis mossambicus, adapted to different environmental salinities.</title>
        <authorList>
            <person name="Feng S.H."/>
            <person name="Leu J.H."/>
            <person name="Yang C.H."/>
            <person name="Fang M.J."/>
            <person name="Huang C.J."/>
            <person name="Hwang P.P."/>
        </authorList>
    </citation>
    <scope>NUCLEOTIDE SEQUENCE [MRNA]</scope>
</reference>
<gene>
    <name type="primary">atp1a1</name>
</gene>
<keyword id="KW-0067">ATP-binding</keyword>
<keyword id="KW-1003">Cell membrane</keyword>
<keyword id="KW-0406">Ion transport</keyword>
<keyword id="KW-0460">Magnesium</keyword>
<keyword id="KW-0472">Membrane</keyword>
<keyword id="KW-0479">Metal-binding</keyword>
<keyword id="KW-0547">Nucleotide-binding</keyword>
<keyword id="KW-0597">Phosphoprotein</keyword>
<keyword id="KW-0630">Potassium</keyword>
<keyword id="KW-0633">Potassium transport</keyword>
<keyword id="KW-0915">Sodium</keyword>
<keyword id="KW-0739">Sodium transport</keyword>
<keyword id="KW-0740">Sodium/potassium transport</keyword>
<keyword id="KW-1278">Translocase</keyword>
<keyword id="KW-0812">Transmembrane</keyword>
<keyword id="KW-1133">Transmembrane helix</keyword>
<keyword id="KW-0813">Transport</keyword>
<dbReference type="EC" id="7.2.2.13"/>
<dbReference type="EMBL" id="U82549">
    <property type="protein sequence ID" value="AAD11455.2"/>
    <property type="molecule type" value="mRNA"/>
</dbReference>
<dbReference type="SMR" id="Q9YH26"/>
<dbReference type="BRENDA" id="7.2.2.13">
    <property type="organism ID" value="4428"/>
</dbReference>
<dbReference type="GO" id="GO:0016020">
    <property type="term" value="C:membrane"/>
    <property type="evidence" value="ECO:0000250"/>
    <property type="project" value="UniProtKB"/>
</dbReference>
<dbReference type="GO" id="GO:0005886">
    <property type="term" value="C:plasma membrane"/>
    <property type="evidence" value="ECO:0000250"/>
    <property type="project" value="UniProtKB"/>
</dbReference>
<dbReference type="GO" id="GO:0042383">
    <property type="term" value="C:sarcolemma"/>
    <property type="evidence" value="ECO:0007669"/>
    <property type="project" value="UniProtKB-SubCell"/>
</dbReference>
<dbReference type="GO" id="GO:0005524">
    <property type="term" value="F:ATP binding"/>
    <property type="evidence" value="ECO:0007669"/>
    <property type="project" value="UniProtKB-KW"/>
</dbReference>
<dbReference type="GO" id="GO:0016887">
    <property type="term" value="F:ATP hydrolysis activity"/>
    <property type="evidence" value="ECO:0007669"/>
    <property type="project" value="InterPro"/>
</dbReference>
<dbReference type="GO" id="GO:0046872">
    <property type="term" value="F:metal ion binding"/>
    <property type="evidence" value="ECO:0007669"/>
    <property type="project" value="UniProtKB-KW"/>
</dbReference>
<dbReference type="GO" id="GO:0005391">
    <property type="term" value="F:P-type sodium:potassium-exchanging transporter activity"/>
    <property type="evidence" value="ECO:0007669"/>
    <property type="project" value="UniProtKB-EC"/>
</dbReference>
<dbReference type="GO" id="GO:0030007">
    <property type="term" value="P:intracellular potassium ion homeostasis"/>
    <property type="evidence" value="ECO:0007669"/>
    <property type="project" value="TreeGrafter"/>
</dbReference>
<dbReference type="GO" id="GO:0006883">
    <property type="term" value="P:intracellular sodium ion homeostasis"/>
    <property type="evidence" value="ECO:0007669"/>
    <property type="project" value="TreeGrafter"/>
</dbReference>
<dbReference type="GO" id="GO:1990573">
    <property type="term" value="P:potassium ion import across plasma membrane"/>
    <property type="evidence" value="ECO:0007669"/>
    <property type="project" value="TreeGrafter"/>
</dbReference>
<dbReference type="GO" id="GO:1902600">
    <property type="term" value="P:proton transmembrane transport"/>
    <property type="evidence" value="ECO:0007669"/>
    <property type="project" value="TreeGrafter"/>
</dbReference>
<dbReference type="GO" id="GO:0036376">
    <property type="term" value="P:sodium ion export across plasma membrane"/>
    <property type="evidence" value="ECO:0007669"/>
    <property type="project" value="TreeGrafter"/>
</dbReference>
<dbReference type="CDD" id="cd02608">
    <property type="entry name" value="P-type_ATPase_Na-K_like"/>
    <property type="match status" value="1"/>
</dbReference>
<dbReference type="FunFam" id="2.70.150.10:FF:000106">
    <property type="entry name" value="Sodium/potassium-transporting ATPase subunit alpha"/>
    <property type="match status" value="1"/>
</dbReference>
<dbReference type="FunFam" id="3.40.1110.10:FF:000001">
    <property type="entry name" value="Sodium/potassium-transporting ATPase subunit alpha"/>
    <property type="match status" value="1"/>
</dbReference>
<dbReference type="FunFam" id="3.40.50.1000:FF:000004">
    <property type="entry name" value="Sodium/potassium-transporting ATPase subunit alpha"/>
    <property type="match status" value="1"/>
</dbReference>
<dbReference type="FunFam" id="1.20.1110.10:FF:000095">
    <property type="entry name" value="Sodium/potassium-transporting ATPase subunit alpha-1"/>
    <property type="match status" value="2"/>
</dbReference>
<dbReference type="Gene3D" id="3.40.1110.10">
    <property type="entry name" value="Calcium-transporting ATPase, cytoplasmic domain N"/>
    <property type="match status" value="1"/>
</dbReference>
<dbReference type="Gene3D" id="2.70.150.10">
    <property type="entry name" value="Calcium-transporting ATPase, cytoplasmic transduction domain A"/>
    <property type="match status" value="1"/>
</dbReference>
<dbReference type="Gene3D" id="1.20.1110.10">
    <property type="entry name" value="Calcium-transporting ATPase, transmembrane domain"/>
    <property type="match status" value="1"/>
</dbReference>
<dbReference type="Gene3D" id="3.40.50.1000">
    <property type="entry name" value="HAD superfamily/HAD-like"/>
    <property type="match status" value="1"/>
</dbReference>
<dbReference type="InterPro" id="IPR006068">
    <property type="entry name" value="ATPase_P-typ_cation-transptr_C"/>
</dbReference>
<dbReference type="InterPro" id="IPR004014">
    <property type="entry name" value="ATPase_P-typ_cation-transptr_N"/>
</dbReference>
<dbReference type="InterPro" id="IPR023299">
    <property type="entry name" value="ATPase_P-typ_cyto_dom_N"/>
</dbReference>
<dbReference type="InterPro" id="IPR018303">
    <property type="entry name" value="ATPase_P-typ_P_site"/>
</dbReference>
<dbReference type="InterPro" id="IPR023298">
    <property type="entry name" value="ATPase_P-typ_TM_dom_sf"/>
</dbReference>
<dbReference type="InterPro" id="IPR008250">
    <property type="entry name" value="ATPase_P-typ_transduc_dom_A_sf"/>
</dbReference>
<dbReference type="InterPro" id="IPR050510">
    <property type="entry name" value="Cation_transp_ATPase_P-type"/>
</dbReference>
<dbReference type="InterPro" id="IPR036412">
    <property type="entry name" value="HAD-like_sf"/>
</dbReference>
<dbReference type="InterPro" id="IPR023214">
    <property type="entry name" value="HAD_sf"/>
</dbReference>
<dbReference type="InterPro" id="IPR005775">
    <property type="entry name" value="P-type_ATPase_IIC"/>
</dbReference>
<dbReference type="InterPro" id="IPR001757">
    <property type="entry name" value="P_typ_ATPase"/>
</dbReference>
<dbReference type="InterPro" id="IPR044492">
    <property type="entry name" value="P_typ_ATPase_HD_dom"/>
</dbReference>
<dbReference type="NCBIfam" id="TIGR01106">
    <property type="entry name" value="ATPase-IIC_X-K"/>
    <property type="match status" value="1"/>
</dbReference>
<dbReference type="NCBIfam" id="TIGR01494">
    <property type="entry name" value="ATPase_P-type"/>
    <property type="match status" value="2"/>
</dbReference>
<dbReference type="PANTHER" id="PTHR43294">
    <property type="entry name" value="SODIUM/POTASSIUM-TRANSPORTING ATPASE SUBUNIT ALPHA"/>
    <property type="match status" value="1"/>
</dbReference>
<dbReference type="PANTHER" id="PTHR43294:SF8">
    <property type="entry name" value="SODIUM_POTASSIUM-TRANSPORTING ATPASE SUBUNIT ALPHA"/>
    <property type="match status" value="1"/>
</dbReference>
<dbReference type="Pfam" id="PF13246">
    <property type="entry name" value="Cation_ATPase"/>
    <property type="match status" value="1"/>
</dbReference>
<dbReference type="Pfam" id="PF00689">
    <property type="entry name" value="Cation_ATPase_C"/>
    <property type="match status" value="1"/>
</dbReference>
<dbReference type="Pfam" id="PF00690">
    <property type="entry name" value="Cation_ATPase_N"/>
    <property type="match status" value="1"/>
</dbReference>
<dbReference type="Pfam" id="PF00122">
    <property type="entry name" value="E1-E2_ATPase"/>
    <property type="match status" value="1"/>
</dbReference>
<dbReference type="PRINTS" id="PR00119">
    <property type="entry name" value="CATATPASE"/>
</dbReference>
<dbReference type="PRINTS" id="PR00121">
    <property type="entry name" value="NAKATPASE"/>
</dbReference>
<dbReference type="SFLD" id="SFLDG00002">
    <property type="entry name" value="C1.7:_P-type_atpase_like"/>
    <property type="match status" value="1"/>
</dbReference>
<dbReference type="SFLD" id="SFLDF00027">
    <property type="entry name" value="p-type_atpase"/>
    <property type="match status" value="1"/>
</dbReference>
<dbReference type="SMART" id="SM00831">
    <property type="entry name" value="Cation_ATPase_N"/>
    <property type="match status" value="1"/>
</dbReference>
<dbReference type="SUPFAM" id="SSF81653">
    <property type="entry name" value="Calcium ATPase, transduction domain A"/>
    <property type="match status" value="1"/>
</dbReference>
<dbReference type="SUPFAM" id="SSF81665">
    <property type="entry name" value="Calcium ATPase, transmembrane domain M"/>
    <property type="match status" value="1"/>
</dbReference>
<dbReference type="SUPFAM" id="SSF56784">
    <property type="entry name" value="HAD-like"/>
    <property type="match status" value="1"/>
</dbReference>
<dbReference type="SUPFAM" id="SSF81660">
    <property type="entry name" value="Metal cation-transporting ATPase, ATP-binding domain N"/>
    <property type="match status" value="1"/>
</dbReference>
<dbReference type="PROSITE" id="PS00154">
    <property type="entry name" value="ATPASE_E1_E2"/>
    <property type="match status" value="1"/>
</dbReference>